<sequence length="159" mass="17783">MRRDETIYILRPTMSEEHINTVIENTNKIILDDAGTIIFYEPSGAUKSLLTUSRKSSQGYYVYCDYAGTPAAVSEMERRFRIEDAVLKYMTVKLSEDISAEEIQQAIGDIAAREAAVKEAAEAEEAANEEVVEKVVEKVAEKAAEKTVEEAAPVKETEE</sequence>
<name>RS6_DESPS</name>
<proteinExistence type="inferred from homology"/>
<feature type="chain" id="PRO_0000176762" description="Small ribosomal subunit protein bS6">
    <location>
        <begin position="1"/>
        <end position="159"/>
    </location>
</feature>
<feature type="non-standard amino acid" description="Selenocysteine" evidence="1">
    <location>
        <position position="46"/>
    </location>
</feature>
<feature type="non-standard amino acid" description="Selenocysteine" evidence="1">
    <location>
        <position position="52"/>
    </location>
</feature>
<keyword id="KW-1185">Reference proteome</keyword>
<keyword id="KW-0687">Ribonucleoprotein</keyword>
<keyword id="KW-0689">Ribosomal protein</keyword>
<keyword id="KW-0694">RNA-binding</keyword>
<keyword id="KW-0699">rRNA-binding</keyword>
<keyword id="KW-0712">Selenocysteine</keyword>
<gene>
    <name evidence="2" type="primary">rpsF</name>
    <name type="ordered locus">DP2595</name>
</gene>
<reference key="1">
    <citation type="journal article" date="2004" name="Environ. Microbiol.">
        <title>The genome of Desulfotalea psychrophila, a sulfate-reducing bacterium from permanently cold Arctic sediments.</title>
        <authorList>
            <person name="Rabus R."/>
            <person name="Ruepp A."/>
            <person name="Frickey T."/>
            <person name="Rattei T."/>
            <person name="Fartmann B."/>
            <person name="Stark M."/>
            <person name="Bauer M."/>
            <person name="Zibat A."/>
            <person name="Lombardot T."/>
            <person name="Becker I."/>
            <person name="Amann J."/>
            <person name="Gellner K."/>
            <person name="Teeling H."/>
            <person name="Leuschner W.D."/>
            <person name="Gloeckner F.-O."/>
            <person name="Lupas A.N."/>
            <person name="Amann R."/>
            <person name="Klenk H.-P."/>
        </authorList>
    </citation>
    <scope>NUCLEOTIDE SEQUENCE [LARGE SCALE GENOMIC DNA]</scope>
    <source>
        <strain>DSM 12343 / LSv54</strain>
    </source>
</reference>
<accession>Q6AK02</accession>
<organism>
    <name type="scientific">Desulfotalea psychrophila (strain LSv54 / DSM 12343)</name>
    <dbReference type="NCBI Taxonomy" id="177439"/>
    <lineage>
        <taxon>Bacteria</taxon>
        <taxon>Pseudomonadati</taxon>
        <taxon>Thermodesulfobacteriota</taxon>
        <taxon>Desulfobulbia</taxon>
        <taxon>Desulfobulbales</taxon>
        <taxon>Desulfocapsaceae</taxon>
        <taxon>Desulfotalea</taxon>
    </lineage>
</organism>
<evidence type="ECO:0000255" key="1"/>
<evidence type="ECO:0000255" key="2">
    <source>
        <dbReference type="HAMAP-Rule" id="MF_00360"/>
    </source>
</evidence>
<evidence type="ECO:0000305" key="3"/>
<protein>
    <recommendedName>
        <fullName evidence="2">Small ribosomal subunit protein bS6</fullName>
    </recommendedName>
    <alternativeName>
        <fullName evidence="3">30S ribosomal protein S6</fullName>
    </alternativeName>
</protein>
<dbReference type="EMBL" id="CR522870">
    <property type="protein sequence ID" value="CAG37324.2"/>
    <property type="molecule type" value="Genomic_DNA"/>
</dbReference>
<dbReference type="STRING" id="177439.DP2595"/>
<dbReference type="KEGG" id="dps:DP2595"/>
<dbReference type="eggNOG" id="COG0360">
    <property type="taxonomic scope" value="Bacteria"/>
</dbReference>
<dbReference type="HOGENOM" id="CLU_113441_4_0_7"/>
<dbReference type="Proteomes" id="UP000000602">
    <property type="component" value="Chromosome"/>
</dbReference>
<dbReference type="GO" id="GO:0005737">
    <property type="term" value="C:cytoplasm"/>
    <property type="evidence" value="ECO:0007669"/>
    <property type="project" value="UniProtKB-ARBA"/>
</dbReference>
<dbReference type="GO" id="GO:1990904">
    <property type="term" value="C:ribonucleoprotein complex"/>
    <property type="evidence" value="ECO:0007669"/>
    <property type="project" value="UniProtKB-KW"/>
</dbReference>
<dbReference type="GO" id="GO:0005840">
    <property type="term" value="C:ribosome"/>
    <property type="evidence" value="ECO:0007669"/>
    <property type="project" value="UniProtKB-KW"/>
</dbReference>
<dbReference type="GO" id="GO:0070181">
    <property type="term" value="F:small ribosomal subunit rRNA binding"/>
    <property type="evidence" value="ECO:0007669"/>
    <property type="project" value="TreeGrafter"/>
</dbReference>
<dbReference type="GO" id="GO:0003735">
    <property type="term" value="F:structural constituent of ribosome"/>
    <property type="evidence" value="ECO:0007669"/>
    <property type="project" value="InterPro"/>
</dbReference>
<dbReference type="GO" id="GO:0006412">
    <property type="term" value="P:translation"/>
    <property type="evidence" value="ECO:0007669"/>
    <property type="project" value="UniProtKB-UniRule"/>
</dbReference>
<dbReference type="CDD" id="cd00473">
    <property type="entry name" value="bS6"/>
    <property type="match status" value="1"/>
</dbReference>
<dbReference type="Gene3D" id="3.30.70.60">
    <property type="match status" value="1"/>
</dbReference>
<dbReference type="HAMAP" id="MF_00360">
    <property type="entry name" value="Ribosomal_bS6"/>
    <property type="match status" value="1"/>
</dbReference>
<dbReference type="InterPro" id="IPR000529">
    <property type="entry name" value="Ribosomal_bS6"/>
</dbReference>
<dbReference type="InterPro" id="IPR035980">
    <property type="entry name" value="Ribosomal_bS6_sf"/>
</dbReference>
<dbReference type="InterPro" id="IPR020814">
    <property type="entry name" value="Ribosomal_S6_plastid/chlpt"/>
</dbReference>
<dbReference type="InterPro" id="IPR014717">
    <property type="entry name" value="Transl_elong_EF1B/ribsomal_bS6"/>
</dbReference>
<dbReference type="NCBIfam" id="TIGR00166">
    <property type="entry name" value="S6"/>
    <property type="match status" value="1"/>
</dbReference>
<dbReference type="PANTHER" id="PTHR21011">
    <property type="entry name" value="MITOCHONDRIAL 28S RIBOSOMAL PROTEIN S6"/>
    <property type="match status" value="1"/>
</dbReference>
<dbReference type="PANTHER" id="PTHR21011:SF1">
    <property type="entry name" value="SMALL RIBOSOMAL SUBUNIT PROTEIN BS6M"/>
    <property type="match status" value="1"/>
</dbReference>
<dbReference type="Pfam" id="PF01250">
    <property type="entry name" value="Ribosomal_S6"/>
    <property type="match status" value="1"/>
</dbReference>
<dbReference type="SUPFAM" id="SSF54995">
    <property type="entry name" value="Ribosomal protein S6"/>
    <property type="match status" value="1"/>
</dbReference>
<comment type="function">
    <text evidence="2">Binds together with bS18 to 16S ribosomal RNA.</text>
</comment>
<comment type="similarity">
    <text evidence="2">Belongs to the bacterial ribosomal protein bS6 family.</text>
</comment>